<comment type="similarity">
    <text evidence="1">Belongs to the universal ribosomal protein uL29 family.</text>
</comment>
<proteinExistence type="inferred from homology"/>
<reference key="1">
    <citation type="journal article" date="2005" name="Nucleic Acids Res.">
        <title>Genome dynamics and diversity of Shigella species, the etiologic agents of bacillary dysentery.</title>
        <authorList>
            <person name="Yang F."/>
            <person name="Yang J."/>
            <person name="Zhang X."/>
            <person name="Chen L."/>
            <person name="Jiang Y."/>
            <person name="Yan Y."/>
            <person name="Tang X."/>
            <person name="Wang J."/>
            <person name="Xiong Z."/>
            <person name="Dong J."/>
            <person name="Xue Y."/>
            <person name="Zhu Y."/>
            <person name="Xu X."/>
            <person name="Sun L."/>
            <person name="Chen S."/>
            <person name="Nie H."/>
            <person name="Peng J."/>
            <person name="Xu J."/>
            <person name="Wang Y."/>
            <person name="Yuan Z."/>
            <person name="Wen Y."/>
            <person name="Yao Z."/>
            <person name="Shen Y."/>
            <person name="Qiang B."/>
            <person name="Hou Y."/>
            <person name="Yu J."/>
            <person name="Jin Q."/>
        </authorList>
    </citation>
    <scope>NUCLEOTIDE SEQUENCE [LARGE SCALE GENOMIC DNA]</scope>
    <source>
        <strain>Ss046</strain>
    </source>
</reference>
<protein>
    <recommendedName>
        <fullName evidence="1">Large ribosomal subunit protein uL29</fullName>
    </recommendedName>
    <alternativeName>
        <fullName evidence="2">50S ribosomal protein L29</fullName>
    </alternativeName>
</protein>
<accession>Q3YWU7</accession>
<keyword id="KW-1185">Reference proteome</keyword>
<keyword id="KW-0687">Ribonucleoprotein</keyword>
<keyword id="KW-0689">Ribosomal protein</keyword>
<gene>
    <name evidence="1" type="primary">rpmC</name>
    <name type="ordered locus">SSON_3453</name>
</gene>
<dbReference type="EMBL" id="CP000038">
    <property type="protein sequence ID" value="AAZ90015.1"/>
    <property type="molecule type" value="Genomic_DNA"/>
</dbReference>
<dbReference type="RefSeq" id="WP_000644741.1">
    <property type="nucleotide sequence ID" value="NC_007384.1"/>
</dbReference>
<dbReference type="SMR" id="Q3YWU7"/>
<dbReference type="GeneID" id="93778675"/>
<dbReference type="KEGG" id="ssn:SSON_3453"/>
<dbReference type="HOGENOM" id="CLU_158491_1_2_6"/>
<dbReference type="Proteomes" id="UP000002529">
    <property type="component" value="Chromosome"/>
</dbReference>
<dbReference type="GO" id="GO:0022625">
    <property type="term" value="C:cytosolic large ribosomal subunit"/>
    <property type="evidence" value="ECO:0007669"/>
    <property type="project" value="TreeGrafter"/>
</dbReference>
<dbReference type="GO" id="GO:0003735">
    <property type="term" value="F:structural constituent of ribosome"/>
    <property type="evidence" value="ECO:0007669"/>
    <property type="project" value="InterPro"/>
</dbReference>
<dbReference type="GO" id="GO:0006412">
    <property type="term" value="P:translation"/>
    <property type="evidence" value="ECO:0007669"/>
    <property type="project" value="UniProtKB-UniRule"/>
</dbReference>
<dbReference type="CDD" id="cd00427">
    <property type="entry name" value="Ribosomal_L29_HIP"/>
    <property type="match status" value="1"/>
</dbReference>
<dbReference type="Gene3D" id="6.10.140.1970">
    <property type="match status" value="1"/>
</dbReference>
<dbReference type="HAMAP" id="MF_00374">
    <property type="entry name" value="Ribosomal_uL29"/>
    <property type="match status" value="1"/>
</dbReference>
<dbReference type="InterPro" id="IPR050063">
    <property type="entry name" value="Ribosomal_protein_uL29"/>
</dbReference>
<dbReference type="InterPro" id="IPR001854">
    <property type="entry name" value="Ribosomal_uL29"/>
</dbReference>
<dbReference type="InterPro" id="IPR018254">
    <property type="entry name" value="Ribosomal_uL29_CS"/>
</dbReference>
<dbReference type="InterPro" id="IPR036049">
    <property type="entry name" value="Ribosomal_uL29_sf"/>
</dbReference>
<dbReference type="NCBIfam" id="TIGR00012">
    <property type="entry name" value="L29"/>
    <property type="match status" value="1"/>
</dbReference>
<dbReference type="PANTHER" id="PTHR10916">
    <property type="entry name" value="60S RIBOSOMAL PROTEIN L35/50S RIBOSOMAL PROTEIN L29"/>
    <property type="match status" value="1"/>
</dbReference>
<dbReference type="PANTHER" id="PTHR10916:SF0">
    <property type="entry name" value="LARGE RIBOSOMAL SUBUNIT PROTEIN UL29C"/>
    <property type="match status" value="1"/>
</dbReference>
<dbReference type="Pfam" id="PF00831">
    <property type="entry name" value="Ribosomal_L29"/>
    <property type="match status" value="1"/>
</dbReference>
<dbReference type="SUPFAM" id="SSF46561">
    <property type="entry name" value="Ribosomal protein L29 (L29p)"/>
    <property type="match status" value="1"/>
</dbReference>
<dbReference type="PROSITE" id="PS00579">
    <property type="entry name" value="RIBOSOMAL_L29"/>
    <property type="match status" value="1"/>
</dbReference>
<evidence type="ECO:0000255" key="1">
    <source>
        <dbReference type="HAMAP-Rule" id="MF_00374"/>
    </source>
</evidence>
<evidence type="ECO:0000305" key="2"/>
<feature type="chain" id="PRO_1000007609" description="Large ribosomal subunit protein uL29">
    <location>
        <begin position="1"/>
        <end position="63"/>
    </location>
</feature>
<sequence length="63" mass="7273">MKAKELREKSVEELNTELLNLLREQFNLRMQAASGQLQQSHLLKQVRRDVARVKTLLNEKAGA</sequence>
<organism>
    <name type="scientific">Shigella sonnei (strain Ss046)</name>
    <dbReference type="NCBI Taxonomy" id="300269"/>
    <lineage>
        <taxon>Bacteria</taxon>
        <taxon>Pseudomonadati</taxon>
        <taxon>Pseudomonadota</taxon>
        <taxon>Gammaproteobacteria</taxon>
        <taxon>Enterobacterales</taxon>
        <taxon>Enterobacteriaceae</taxon>
        <taxon>Shigella</taxon>
    </lineage>
</organism>
<name>RL29_SHISS</name>